<keyword id="KW-0002">3D-structure</keyword>
<keyword id="KW-0025">Alternative splicing</keyword>
<keyword id="KW-0106">Calcium</keyword>
<keyword id="KW-0130">Cell adhesion</keyword>
<keyword id="KW-1003">Cell membrane</keyword>
<keyword id="KW-0325">Glycoprotein</keyword>
<keyword id="KW-0472">Membrane</keyword>
<keyword id="KW-1267">Proteomics identification</keyword>
<keyword id="KW-0675">Receptor</keyword>
<keyword id="KW-1185">Reference proteome</keyword>
<keyword id="KW-0677">Repeat</keyword>
<keyword id="KW-0732">Signal</keyword>
<keyword id="KW-0812">Transmembrane</keyword>
<keyword id="KW-1133">Transmembrane helix</keyword>
<evidence type="ECO:0000250" key="1"/>
<evidence type="ECO:0000255" key="2"/>
<evidence type="ECO:0000255" key="3">
    <source>
        <dbReference type="PROSITE-ProRule" id="PRU00043"/>
    </source>
</evidence>
<evidence type="ECO:0000256" key="4">
    <source>
        <dbReference type="SAM" id="MobiDB-lite"/>
    </source>
</evidence>
<evidence type="ECO:0000269" key="5">
    <source>
    </source>
</evidence>
<evidence type="ECO:0000269" key="6">
    <source>
    </source>
</evidence>
<evidence type="ECO:0000303" key="7">
    <source>
    </source>
</evidence>
<evidence type="ECO:0000303" key="8">
    <source>
    </source>
</evidence>
<evidence type="ECO:0000305" key="9"/>
<evidence type="ECO:0007829" key="10">
    <source>
        <dbReference type="PDB" id="6VFQ"/>
    </source>
</evidence>
<evidence type="ECO:0007829" key="11">
    <source>
        <dbReference type="PDB" id="6VG4"/>
    </source>
</evidence>
<proteinExistence type="evidence at protein level"/>
<reference key="1">
    <citation type="journal article" date="2001" name="Genome Res.">
        <title>Comparative DNA sequence analysis of mouse and human protocadherin gene clusters.</title>
        <authorList>
            <person name="Wu Q."/>
            <person name="Zhang T."/>
            <person name="Cheng J.-F."/>
            <person name="Kim Y."/>
            <person name="Grimwood J."/>
            <person name="Schmutz J."/>
            <person name="Dickson M."/>
            <person name="Noonan J.P."/>
            <person name="Zhang M.Q."/>
            <person name="Myers R.M."/>
            <person name="Maniatis T."/>
        </authorList>
    </citation>
    <scope>NUCLEOTIDE SEQUENCE [MRNA] (ISOFORM 2)</scope>
</reference>
<reference key="2">
    <citation type="journal article" date="2000" name="DNA Res.">
        <title>Prediction of the coding sequences of unidentified human genes. XVI. The complete sequences of 150 new cDNA clones from brain which code for large proteins in vitro.</title>
        <authorList>
            <person name="Nagase T."/>
            <person name="Kikuno R."/>
            <person name="Ishikawa K."/>
            <person name="Hirosawa M."/>
            <person name="Ohara O."/>
        </authorList>
    </citation>
    <scope>NUCLEOTIDE SEQUENCE [LARGE SCALE MRNA] (ISOFORM 1)</scope>
    <source>
        <tissue>Brain</tissue>
    </source>
</reference>
<reference key="3">
    <citation type="journal article" date="2004" name="Nat. Genet.">
        <title>Complete sequencing and characterization of 21,243 full-length human cDNAs.</title>
        <authorList>
            <person name="Ota T."/>
            <person name="Suzuki Y."/>
            <person name="Nishikawa T."/>
            <person name="Otsuki T."/>
            <person name="Sugiyama T."/>
            <person name="Irie R."/>
            <person name="Wakamatsu A."/>
            <person name="Hayashi K."/>
            <person name="Sato H."/>
            <person name="Nagai K."/>
            <person name="Kimura K."/>
            <person name="Makita H."/>
            <person name="Sekine M."/>
            <person name="Obayashi M."/>
            <person name="Nishi T."/>
            <person name="Shibahara T."/>
            <person name="Tanaka T."/>
            <person name="Ishii S."/>
            <person name="Yamamoto J."/>
            <person name="Saito K."/>
            <person name="Kawai Y."/>
            <person name="Isono Y."/>
            <person name="Nakamura Y."/>
            <person name="Nagahari K."/>
            <person name="Murakami K."/>
            <person name="Yasuda T."/>
            <person name="Iwayanagi T."/>
            <person name="Wagatsuma M."/>
            <person name="Shiratori A."/>
            <person name="Sudo H."/>
            <person name="Hosoiri T."/>
            <person name="Kaku Y."/>
            <person name="Kodaira H."/>
            <person name="Kondo H."/>
            <person name="Sugawara M."/>
            <person name="Takahashi M."/>
            <person name="Kanda K."/>
            <person name="Yokoi T."/>
            <person name="Furuya T."/>
            <person name="Kikkawa E."/>
            <person name="Omura Y."/>
            <person name="Abe K."/>
            <person name="Kamihara K."/>
            <person name="Katsuta N."/>
            <person name="Sato K."/>
            <person name="Tanikawa M."/>
            <person name="Yamazaki M."/>
            <person name="Ninomiya K."/>
            <person name="Ishibashi T."/>
            <person name="Yamashita H."/>
            <person name="Murakawa K."/>
            <person name="Fujimori K."/>
            <person name="Tanai H."/>
            <person name="Kimata M."/>
            <person name="Watanabe M."/>
            <person name="Hiraoka S."/>
            <person name="Chiba Y."/>
            <person name="Ishida S."/>
            <person name="Ono Y."/>
            <person name="Takiguchi S."/>
            <person name="Watanabe S."/>
            <person name="Yosida M."/>
            <person name="Hotuta T."/>
            <person name="Kusano J."/>
            <person name="Kanehori K."/>
            <person name="Takahashi-Fujii A."/>
            <person name="Hara H."/>
            <person name="Tanase T.-O."/>
            <person name="Nomura Y."/>
            <person name="Togiya S."/>
            <person name="Komai F."/>
            <person name="Hara R."/>
            <person name="Takeuchi K."/>
            <person name="Arita M."/>
            <person name="Imose N."/>
            <person name="Musashino K."/>
            <person name="Yuuki H."/>
            <person name="Oshima A."/>
            <person name="Sasaki N."/>
            <person name="Aotsuka S."/>
            <person name="Yoshikawa Y."/>
            <person name="Matsunawa H."/>
            <person name="Ichihara T."/>
            <person name="Shiohata N."/>
            <person name="Sano S."/>
            <person name="Moriya S."/>
            <person name="Momiyama H."/>
            <person name="Satoh N."/>
            <person name="Takami S."/>
            <person name="Terashima Y."/>
            <person name="Suzuki O."/>
            <person name="Nakagawa S."/>
            <person name="Senoh A."/>
            <person name="Mizoguchi H."/>
            <person name="Goto Y."/>
            <person name="Shimizu F."/>
            <person name="Wakebe H."/>
            <person name="Hishigaki H."/>
            <person name="Watanabe T."/>
            <person name="Sugiyama A."/>
            <person name="Takemoto M."/>
            <person name="Kawakami B."/>
            <person name="Yamazaki M."/>
            <person name="Watanabe K."/>
            <person name="Kumagai A."/>
            <person name="Itakura S."/>
            <person name="Fukuzumi Y."/>
            <person name="Fujimori Y."/>
            <person name="Komiyama M."/>
            <person name="Tashiro H."/>
            <person name="Tanigami A."/>
            <person name="Fujiwara T."/>
            <person name="Ono T."/>
            <person name="Yamada K."/>
            <person name="Fujii Y."/>
            <person name="Ozaki K."/>
            <person name="Hirao M."/>
            <person name="Ohmori Y."/>
            <person name="Kawabata A."/>
            <person name="Hikiji T."/>
            <person name="Kobatake N."/>
            <person name="Inagaki H."/>
            <person name="Ikema Y."/>
            <person name="Okamoto S."/>
            <person name="Okitani R."/>
            <person name="Kawakami T."/>
            <person name="Noguchi S."/>
            <person name="Itoh T."/>
            <person name="Shigeta K."/>
            <person name="Senba T."/>
            <person name="Matsumura K."/>
            <person name="Nakajima Y."/>
            <person name="Mizuno T."/>
            <person name="Morinaga M."/>
            <person name="Sasaki M."/>
            <person name="Togashi T."/>
            <person name="Oyama M."/>
            <person name="Hata H."/>
            <person name="Watanabe M."/>
            <person name="Komatsu T."/>
            <person name="Mizushima-Sugano J."/>
            <person name="Satoh T."/>
            <person name="Shirai Y."/>
            <person name="Takahashi Y."/>
            <person name="Nakagawa K."/>
            <person name="Okumura K."/>
            <person name="Nagase T."/>
            <person name="Nomura N."/>
            <person name="Kikuchi H."/>
            <person name="Masuho Y."/>
            <person name="Yamashita R."/>
            <person name="Nakai K."/>
            <person name="Yada T."/>
            <person name="Nakamura Y."/>
            <person name="Ohara O."/>
            <person name="Isogai T."/>
            <person name="Sugano S."/>
        </authorList>
    </citation>
    <scope>NUCLEOTIDE SEQUENCE [LARGE SCALE MRNA] (ISOFORM 2)</scope>
    <source>
        <tissue>Hippocampus</tissue>
    </source>
</reference>
<reference key="4">
    <citation type="journal article" date="2005" name="Nature">
        <title>Generation and annotation of the DNA sequences of human chromosomes 2 and 4.</title>
        <authorList>
            <person name="Hillier L.W."/>
            <person name="Graves T.A."/>
            <person name="Fulton R.S."/>
            <person name="Fulton L.A."/>
            <person name="Pepin K.H."/>
            <person name="Minx P."/>
            <person name="Wagner-McPherson C."/>
            <person name="Layman D."/>
            <person name="Wylie K."/>
            <person name="Sekhon M."/>
            <person name="Becker M.C."/>
            <person name="Fewell G.A."/>
            <person name="Delehaunty K.D."/>
            <person name="Miner T.L."/>
            <person name="Nash W.E."/>
            <person name="Kremitzki C."/>
            <person name="Oddy L."/>
            <person name="Du H."/>
            <person name="Sun H."/>
            <person name="Bradshaw-Cordum H."/>
            <person name="Ali J."/>
            <person name="Carter J."/>
            <person name="Cordes M."/>
            <person name="Harris A."/>
            <person name="Isak A."/>
            <person name="van Brunt A."/>
            <person name="Nguyen C."/>
            <person name="Du F."/>
            <person name="Courtney L."/>
            <person name="Kalicki J."/>
            <person name="Ozersky P."/>
            <person name="Abbott S."/>
            <person name="Armstrong J."/>
            <person name="Belter E.A."/>
            <person name="Caruso L."/>
            <person name="Cedroni M."/>
            <person name="Cotton M."/>
            <person name="Davidson T."/>
            <person name="Desai A."/>
            <person name="Elliott G."/>
            <person name="Erb T."/>
            <person name="Fronick C."/>
            <person name="Gaige T."/>
            <person name="Haakenson W."/>
            <person name="Haglund K."/>
            <person name="Holmes A."/>
            <person name="Harkins R."/>
            <person name="Kim K."/>
            <person name="Kruchowski S.S."/>
            <person name="Strong C.M."/>
            <person name="Grewal N."/>
            <person name="Goyea E."/>
            <person name="Hou S."/>
            <person name="Levy A."/>
            <person name="Martinka S."/>
            <person name="Mead K."/>
            <person name="McLellan M.D."/>
            <person name="Meyer R."/>
            <person name="Randall-Maher J."/>
            <person name="Tomlinson C."/>
            <person name="Dauphin-Kohlberg S."/>
            <person name="Kozlowicz-Reilly A."/>
            <person name="Shah N."/>
            <person name="Swearengen-Shahid S."/>
            <person name="Snider J."/>
            <person name="Strong J.T."/>
            <person name="Thompson J."/>
            <person name="Yoakum M."/>
            <person name="Leonard S."/>
            <person name="Pearman C."/>
            <person name="Trani L."/>
            <person name="Radionenko M."/>
            <person name="Waligorski J.E."/>
            <person name="Wang C."/>
            <person name="Rock S.M."/>
            <person name="Tin-Wollam A.-M."/>
            <person name="Maupin R."/>
            <person name="Latreille P."/>
            <person name="Wendl M.C."/>
            <person name="Yang S.-P."/>
            <person name="Pohl C."/>
            <person name="Wallis J.W."/>
            <person name="Spieth J."/>
            <person name="Bieri T.A."/>
            <person name="Berkowicz N."/>
            <person name="Nelson J.O."/>
            <person name="Osborne J."/>
            <person name="Ding L."/>
            <person name="Meyer R."/>
            <person name="Sabo A."/>
            <person name="Shotland Y."/>
            <person name="Sinha P."/>
            <person name="Wohldmann P.E."/>
            <person name="Cook L.L."/>
            <person name="Hickenbotham M.T."/>
            <person name="Eldred J."/>
            <person name="Williams D."/>
            <person name="Jones T.A."/>
            <person name="She X."/>
            <person name="Ciccarelli F.D."/>
            <person name="Izaurralde E."/>
            <person name="Taylor J."/>
            <person name="Schmutz J."/>
            <person name="Myers R.M."/>
            <person name="Cox D.R."/>
            <person name="Huang X."/>
            <person name="McPherson J.D."/>
            <person name="Mardis E.R."/>
            <person name="Clifton S.W."/>
            <person name="Warren W.C."/>
            <person name="Chinwalla A.T."/>
            <person name="Eddy S.R."/>
            <person name="Marra M.A."/>
            <person name="Ovcharenko I."/>
            <person name="Furey T.S."/>
            <person name="Miller W."/>
            <person name="Eichler E.E."/>
            <person name="Bork P."/>
            <person name="Suyama M."/>
            <person name="Torrents D."/>
            <person name="Waterston R.H."/>
            <person name="Wilson R.K."/>
        </authorList>
    </citation>
    <scope>NUCLEOTIDE SEQUENCE [LARGE SCALE GENOMIC DNA]</scope>
</reference>
<reference key="5">
    <citation type="submission" date="2005-09" db="EMBL/GenBank/DDBJ databases">
        <authorList>
            <person name="Mural R.J."/>
            <person name="Istrail S."/>
            <person name="Sutton G.G."/>
            <person name="Florea L."/>
            <person name="Halpern A.L."/>
            <person name="Mobarry C.M."/>
            <person name="Lippert R."/>
            <person name="Walenz B."/>
            <person name="Shatkay H."/>
            <person name="Dew I."/>
            <person name="Miller J.R."/>
            <person name="Flanigan M.J."/>
            <person name="Edwards N.J."/>
            <person name="Bolanos R."/>
            <person name="Fasulo D."/>
            <person name="Halldorsson B.V."/>
            <person name="Hannenhalli S."/>
            <person name="Turner R."/>
            <person name="Yooseph S."/>
            <person name="Lu F."/>
            <person name="Nusskern D.R."/>
            <person name="Shue B.C."/>
            <person name="Zheng X.H."/>
            <person name="Zhong F."/>
            <person name="Delcher A.L."/>
            <person name="Huson D.H."/>
            <person name="Kravitz S.A."/>
            <person name="Mouchard L."/>
            <person name="Reinert K."/>
            <person name="Remington K.A."/>
            <person name="Clark A.G."/>
            <person name="Waterman M.S."/>
            <person name="Eichler E.E."/>
            <person name="Adams M.D."/>
            <person name="Hunkapiller M.W."/>
            <person name="Myers E.W."/>
            <person name="Venter J.C."/>
        </authorList>
    </citation>
    <scope>NUCLEOTIDE SEQUENCE [LARGE SCALE GENOMIC DNA]</scope>
</reference>
<reference key="6">
    <citation type="journal article" date="2001" name="Genomics">
        <title>Identification and characterization of three members of a novel subclass of protocadherins.</title>
        <authorList>
            <person name="Wolverton T."/>
            <person name="Lalande M."/>
        </authorList>
    </citation>
    <scope>GENE STRUCTURE</scope>
    <scope>TISSUE SPECIFICITY</scope>
</reference>
<reference key="7">
    <citation type="journal article" date="2024" name="Nature">
        <title>Shifts in receptors during submergence of an encephalitic arbovirus.</title>
        <authorList>
            <person name="Li W."/>
            <person name="Plante J.A."/>
            <person name="Lin C."/>
            <person name="Basu H."/>
            <person name="Plung J.S."/>
            <person name="Fan X."/>
            <person name="Boeckers J.M."/>
            <person name="Oros J."/>
            <person name="Buck T.K."/>
            <person name="Anekal P.V."/>
            <person name="Hanson W.A."/>
            <person name="Varnum H."/>
            <person name="Wells A."/>
            <person name="Mann C.J."/>
            <person name="Tjang L.V."/>
            <person name="Yang P."/>
            <person name="Reyna R.A."/>
            <person name="Mitchell B.M."/>
            <person name="Shinde D.P."/>
            <person name="Walker J.L."/>
            <person name="Choi S.Y."/>
            <person name="Brusic V."/>
            <person name="Llopis P.M."/>
            <person name="Weaver S.C."/>
            <person name="Umemori H."/>
            <person name="Chiu I.M."/>
            <person name="Plante K.S."/>
            <person name="Abraham J."/>
        </authorList>
    </citation>
    <scope>FUNCTION (MICROBIAL INFECTION)</scope>
</reference>
<dbReference type="EMBL" id="AY013874">
    <property type="protein sequence ID" value="AAK21987.1"/>
    <property type="molecule type" value="mRNA"/>
</dbReference>
<dbReference type="EMBL" id="AB037821">
    <property type="protein sequence ID" value="BAA92638.1"/>
    <property type="status" value="ALT_INIT"/>
    <property type="molecule type" value="mRNA"/>
</dbReference>
<dbReference type="EMBL" id="AK314377">
    <property type="protein sequence ID" value="BAG37004.1"/>
    <property type="molecule type" value="mRNA"/>
</dbReference>
<dbReference type="EMBL" id="AC105383">
    <property type="protein sequence ID" value="AAY41018.1"/>
    <property type="molecule type" value="Genomic_DNA"/>
</dbReference>
<dbReference type="EMBL" id="CH471056">
    <property type="protein sequence ID" value="EAX05151.1"/>
    <property type="molecule type" value="Genomic_DNA"/>
</dbReference>
<dbReference type="EMBL" id="CH471056">
    <property type="protein sequence ID" value="EAX05152.1"/>
    <property type="molecule type" value="Genomic_DNA"/>
</dbReference>
<dbReference type="CCDS" id="CCDS34063.1">
    <molecule id="Q9P2E7-1"/>
</dbReference>
<dbReference type="CCDS" id="CCDS75192.1">
    <molecule id="Q9P2E7-2"/>
</dbReference>
<dbReference type="RefSeq" id="NP_065866.1">
    <molecule id="Q9P2E7-2"/>
    <property type="nucleotide sequence ID" value="NM_020815.3"/>
</dbReference>
<dbReference type="RefSeq" id="NP_116586.1">
    <molecule id="Q9P2E7-1"/>
    <property type="nucleotide sequence ID" value="NM_032961.3"/>
</dbReference>
<dbReference type="PDB" id="6VFQ">
    <property type="method" value="X-ray"/>
    <property type="resolution" value="2.30 A"/>
    <property type="chains" value="A=18-455"/>
</dbReference>
<dbReference type="PDB" id="6VFW">
    <property type="method" value="X-ray"/>
    <property type="resolution" value="3.60 A"/>
    <property type="chains" value="A/B/C/D/E=18-455"/>
</dbReference>
<dbReference type="PDB" id="6VG4">
    <property type="method" value="X-ray"/>
    <property type="resolution" value="3.30 A"/>
    <property type="chains" value="A=18-680"/>
</dbReference>
<dbReference type="PDBsum" id="6VFQ"/>
<dbReference type="PDBsum" id="6VFW"/>
<dbReference type="PDBsum" id="6VG4"/>
<dbReference type="EMDB" id="EMD-21191"/>
<dbReference type="EMDB" id="EMD-21192"/>
<dbReference type="EMDB" id="EMD-21193"/>
<dbReference type="SMR" id="Q9P2E7"/>
<dbReference type="BioGRID" id="121628">
    <property type="interactions" value="63"/>
</dbReference>
<dbReference type="FunCoup" id="Q9P2E7">
    <property type="interactions" value="635"/>
</dbReference>
<dbReference type="IntAct" id="Q9P2E7">
    <property type="interactions" value="60"/>
</dbReference>
<dbReference type="STRING" id="9606.ENSP00000264360"/>
<dbReference type="GlyCosmos" id="Q9P2E7">
    <property type="glycosylation" value="2 sites, No reported glycans"/>
</dbReference>
<dbReference type="GlyGen" id="Q9P2E7">
    <property type="glycosylation" value="3 sites"/>
</dbReference>
<dbReference type="iPTMnet" id="Q9P2E7"/>
<dbReference type="PhosphoSitePlus" id="Q9P2E7"/>
<dbReference type="SwissPalm" id="Q9P2E7"/>
<dbReference type="BioMuta" id="PCDH10"/>
<dbReference type="DMDM" id="41017507"/>
<dbReference type="jPOST" id="Q9P2E7"/>
<dbReference type="MassIVE" id="Q9P2E7"/>
<dbReference type="PaxDb" id="9606-ENSP00000264360"/>
<dbReference type="PeptideAtlas" id="Q9P2E7"/>
<dbReference type="ProteomicsDB" id="83796">
    <molecule id="Q9P2E7-1"/>
</dbReference>
<dbReference type="Antibodypedia" id="2468">
    <property type="antibodies" value="159 antibodies from 26 providers"/>
</dbReference>
<dbReference type="DNASU" id="57575"/>
<dbReference type="Ensembl" id="ENST00000264360.7">
    <molecule id="Q9P2E7-1"/>
    <property type="protein sequence ID" value="ENSP00000264360.4"/>
    <property type="gene ID" value="ENSG00000138650.9"/>
</dbReference>
<dbReference type="Ensembl" id="ENST00000618019.1">
    <molecule id="Q9P2E7-2"/>
    <property type="protein sequence ID" value="ENSP00000480512.1"/>
    <property type="gene ID" value="ENSG00000138650.9"/>
</dbReference>
<dbReference type="GeneID" id="57575"/>
<dbReference type="KEGG" id="hsa:57575"/>
<dbReference type="MANE-Select" id="ENST00000264360.7">
    <property type="protein sequence ID" value="ENSP00000264360.4"/>
    <property type="RefSeq nucleotide sequence ID" value="NM_032961.3"/>
    <property type="RefSeq protein sequence ID" value="NP_116586.1"/>
</dbReference>
<dbReference type="UCSC" id="uc003igz.4">
    <molecule id="Q9P2E7-1"/>
    <property type="organism name" value="human"/>
</dbReference>
<dbReference type="AGR" id="HGNC:13404"/>
<dbReference type="CTD" id="57575"/>
<dbReference type="DisGeNET" id="57575"/>
<dbReference type="GeneCards" id="PCDH10"/>
<dbReference type="HGNC" id="HGNC:13404">
    <property type="gene designation" value="PCDH10"/>
</dbReference>
<dbReference type="HPA" id="ENSG00000138650">
    <property type="expression patterns" value="Group enriched (brain, placenta, prostate, seminal vesicle)"/>
</dbReference>
<dbReference type="MalaCards" id="PCDH10"/>
<dbReference type="MIM" id="608286">
    <property type="type" value="gene"/>
</dbReference>
<dbReference type="neXtProt" id="NX_Q9P2E7"/>
<dbReference type="OpenTargets" id="ENSG00000138650"/>
<dbReference type="PharmGKB" id="PA32995"/>
<dbReference type="VEuPathDB" id="HostDB:ENSG00000138650"/>
<dbReference type="eggNOG" id="KOG3594">
    <property type="taxonomic scope" value="Eukaryota"/>
</dbReference>
<dbReference type="GeneTree" id="ENSGT00940000158277"/>
<dbReference type="HOGENOM" id="CLU_006480_3_0_1"/>
<dbReference type="InParanoid" id="Q9P2E7"/>
<dbReference type="OMA" id="FPLEMIV"/>
<dbReference type="OrthoDB" id="6252479at2759"/>
<dbReference type="PAN-GO" id="Q9P2E7">
    <property type="GO annotations" value="2 GO annotations based on evolutionary models"/>
</dbReference>
<dbReference type="PhylomeDB" id="Q9P2E7"/>
<dbReference type="TreeFam" id="TF352008"/>
<dbReference type="PathwayCommons" id="Q9P2E7"/>
<dbReference type="SignaLink" id="Q9P2E7"/>
<dbReference type="SIGNOR" id="Q9P2E7"/>
<dbReference type="BioGRID-ORCS" id="57575">
    <property type="hits" value="17 hits in 1151 CRISPR screens"/>
</dbReference>
<dbReference type="ChiTaRS" id="PCDH10">
    <property type="organism name" value="human"/>
</dbReference>
<dbReference type="GeneWiki" id="PCDH10"/>
<dbReference type="GenomeRNAi" id="57575"/>
<dbReference type="Pharos" id="Q9P2E7">
    <property type="development level" value="Tbio"/>
</dbReference>
<dbReference type="PRO" id="PR:Q9P2E7"/>
<dbReference type="Proteomes" id="UP000005640">
    <property type="component" value="Chromosome 4"/>
</dbReference>
<dbReference type="RNAct" id="Q9P2E7">
    <property type="molecule type" value="protein"/>
</dbReference>
<dbReference type="Bgee" id="ENSG00000138650">
    <property type="expression patterns" value="Expressed in endothelial cell and 126 other cell types or tissues"/>
</dbReference>
<dbReference type="ExpressionAtlas" id="Q9P2E7">
    <property type="expression patterns" value="baseline and differential"/>
</dbReference>
<dbReference type="GO" id="GO:0098978">
    <property type="term" value="C:glutamatergic synapse"/>
    <property type="evidence" value="ECO:0007669"/>
    <property type="project" value="Ensembl"/>
</dbReference>
<dbReference type="GO" id="GO:0005886">
    <property type="term" value="C:plasma membrane"/>
    <property type="evidence" value="ECO:0000318"/>
    <property type="project" value="GO_Central"/>
</dbReference>
<dbReference type="GO" id="GO:0045211">
    <property type="term" value="C:postsynaptic membrane"/>
    <property type="evidence" value="ECO:0007669"/>
    <property type="project" value="Ensembl"/>
</dbReference>
<dbReference type="GO" id="GO:0005509">
    <property type="term" value="F:calcium ion binding"/>
    <property type="evidence" value="ECO:0007669"/>
    <property type="project" value="InterPro"/>
</dbReference>
<dbReference type="GO" id="GO:0007155">
    <property type="term" value="P:cell adhesion"/>
    <property type="evidence" value="ECO:0000318"/>
    <property type="project" value="GO_Central"/>
</dbReference>
<dbReference type="GO" id="GO:0007156">
    <property type="term" value="P:homophilic cell adhesion via plasma membrane adhesion molecules"/>
    <property type="evidence" value="ECO:0007669"/>
    <property type="project" value="Ensembl"/>
</dbReference>
<dbReference type="GO" id="GO:0007399">
    <property type="term" value="P:nervous system development"/>
    <property type="evidence" value="ECO:0007669"/>
    <property type="project" value="UniProtKB-ARBA"/>
</dbReference>
<dbReference type="CDD" id="cd11304">
    <property type="entry name" value="Cadherin_repeat"/>
    <property type="match status" value="6"/>
</dbReference>
<dbReference type="FunFam" id="2.60.40.60:FF:000093">
    <property type="entry name" value="Protocadherin 10"/>
    <property type="match status" value="1"/>
</dbReference>
<dbReference type="FunFam" id="2.60.40.60:FF:000248">
    <property type="entry name" value="Protocadherin 10"/>
    <property type="match status" value="1"/>
</dbReference>
<dbReference type="FunFam" id="2.60.40.60:FF:000001">
    <property type="entry name" value="Protocadherin alpha 2"/>
    <property type="match status" value="1"/>
</dbReference>
<dbReference type="FunFam" id="2.60.40.60:FF:000002">
    <property type="entry name" value="Protocadherin alpha 2"/>
    <property type="match status" value="1"/>
</dbReference>
<dbReference type="FunFam" id="2.60.40.60:FF:000006">
    <property type="entry name" value="Protocadherin alpha 2"/>
    <property type="match status" value="1"/>
</dbReference>
<dbReference type="FunFam" id="2.60.40.60:FF:000018">
    <property type="entry name" value="Protocadherin gamma c3"/>
    <property type="match status" value="1"/>
</dbReference>
<dbReference type="Gene3D" id="2.60.40.60">
    <property type="entry name" value="Cadherins"/>
    <property type="match status" value="6"/>
</dbReference>
<dbReference type="InterPro" id="IPR002126">
    <property type="entry name" value="Cadherin-like_dom"/>
</dbReference>
<dbReference type="InterPro" id="IPR015919">
    <property type="entry name" value="Cadherin-like_sf"/>
</dbReference>
<dbReference type="InterPro" id="IPR032455">
    <property type="entry name" value="Cadherin_C"/>
</dbReference>
<dbReference type="InterPro" id="IPR020894">
    <property type="entry name" value="Cadherin_CS"/>
</dbReference>
<dbReference type="InterPro" id="IPR013164">
    <property type="entry name" value="Cadherin_N"/>
</dbReference>
<dbReference type="InterPro" id="IPR050174">
    <property type="entry name" value="Protocadherin/Cadherin-CA"/>
</dbReference>
<dbReference type="PANTHER" id="PTHR24028">
    <property type="entry name" value="CADHERIN-87A"/>
    <property type="match status" value="1"/>
</dbReference>
<dbReference type="PANTHER" id="PTHR24028:SF0">
    <property type="entry name" value="PROTOCADHERIN-10"/>
    <property type="match status" value="1"/>
</dbReference>
<dbReference type="Pfam" id="PF00028">
    <property type="entry name" value="Cadherin"/>
    <property type="match status" value="4"/>
</dbReference>
<dbReference type="Pfam" id="PF08266">
    <property type="entry name" value="Cadherin_2"/>
    <property type="match status" value="1"/>
</dbReference>
<dbReference type="Pfam" id="PF16492">
    <property type="entry name" value="Cadherin_C_2"/>
    <property type="match status" value="1"/>
</dbReference>
<dbReference type="PRINTS" id="PR00205">
    <property type="entry name" value="CADHERIN"/>
</dbReference>
<dbReference type="SMART" id="SM00112">
    <property type="entry name" value="CA"/>
    <property type="match status" value="6"/>
</dbReference>
<dbReference type="SUPFAM" id="SSF49313">
    <property type="entry name" value="Cadherin-like"/>
    <property type="match status" value="6"/>
</dbReference>
<dbReference type="PROSITE" id="PS00232">
    <property type="entry name" value="CADHERIN_1"/>
    <property type="match status" value="5"/>
</dbReference>
<dbReference type="PROSITE" id="PS50268">
    <property type="entry name" value="CADHERIN_2"/>
    <property type="match status" value="6"/>
</dbReference>
<feature type="signal peptide" evidence="2">
    <location>
        <begin position="1"/>
        <end position="18"/>
    </location>
</feature>
<feature type="chain" id="PRO_0000003995" description="Protocadherin-10">
    <location>
        <begin position="19"/>
        <end position="1040"/>
    </location>
</feature>
<feature type="topological domain" description="Extracellular" evidence="2">
    <location>
        <begin position="19"/>
        <end position="715"/>
    </location>
</feature>
<feature type="transmembrane region" description="Helical" evidence="2">
    <location>
        <begin position="716"/>
        <end position="736"/>
    </location>
</feature>
<feature type="topological domain" description="Cytoplasmic" evidence="2">
    <location>
        <begin position="737"/>
        <end position="1040"/>
    </location>
</feature>
<feature type="domain" description="Cadherin 1" evidence="3">
    <location>
        <begin position="19"/>
        <end position="122"/>
    </location>
</feature>
<feature type="domain" description="Cadherin 2" evidence="3">
    <location>
        <begin position="123"/>
        <end position="250"/>
    </location>
</feature>
<feature type="domain" description="Cadherin 3" evidence="3">
    <location>
        <begin position="251"/>
        <end position="358"/>
    </location>
</feature>
<feature type="domain" description="Cadherin 4" evidence="3">
    <location>
        <begin position="359"/>
        <end position="463"/>
    </location>
</feature>
<feature type="domain" description="Cadherin 5" evidence="3">
    <location>
        <begin position="464"/>
        <end position="574"/>
    </location>
</feature>
<feature type="domain" description="Cadherin 6" evidence="3">
    <location>
        <begin position="582"/>
        <end position="690"/>
    </location>
</feature>
<feature type="region of interest" description="Disordered" evidence="4">
    <location>
        <begin position="207"/>
        <end position="228"/>
    </location>
</feature>
<feature type="region of interest" description="Disordered" evidence="4">
    <location>
        <begin position="686"/>
        <end position="708"/>
    </location>
</feature>
<feature type="region of interest" description="Disordered" evidence="4">
    <location>
        <begin position="899"/>
        <end position="927"/>
    </location>
</feature>
<feature type="compositionally biased region" description="Gly residues" evidence="4">
    <location>
        <begin position="207"/>
        <end position="223"/>
    </location>
</feature>
<feature type="compositionally biased region" description="Gly residues" evidence="4">
    <location>
        <begin position="686"/>
        <end position="697"/>
    </location>
</feature>
<feature type="compositionally biased region" description="Basic and acidic residues" evidence="4">
    <location>
        <begin position="910"/>
        <end position="926"/>
    </location>
</feature>
<feature type="glycosylation site" description="N-linked (GlcNAc...) asparagine" evidence="2">
    <location>
        <position position="273"/>
    </location>
</feature>
<feature type="glycosylation site" description="N-linked (GlcNAc...) asparagine" evidence="2">
    <location>
        <position position="557"/>
    </location>
</feature>
<feature type="splice variant" id="VSP_054404" description="In isoform 2." evidence="7 8">
    <original>TKHQRAELSYLVDRPRRVN</original>
    <variation>VRLKRKDHHLSSPPSESLL</variation>
    <location>
        <begin position="878"/>
        <end position="896"/>
    </location>
</feature>
<feature type="splice variant" id="VSP_054405" description="In isoform 2." evidence="7 8">
    <location>
        <begin position="897"/>
        <end position="1040"/>
    </location>
</feature>
<feature type="strand" evidence="10">
    <location>
        <begin position="20"/>
        <end position="25"/>
    </location>
</feature>
<feature type="strand" evidence="10">
    <location>
        <begin position="33"/>
        <end position="36"/>
    </location>
</feature>
<feature type="helix" evidence="10">
    <location>
        <begin position="37"/>
        <end position="41"/>
    </location>
</feature>
<feature type="helix" evidence="10">
    <location>
        <begin position="45"/>
        <end position="48"/>
    </location>
</feature>
<feature type="turn" evidence="10">
    <location>
        <begin position="49"/>
        <end position="52"/>
    </location>
</feature>
<feature type="helix" evidence="10">
    <location>
        <begin position="57"/>
        <end position="59"/>
    </location>
</feature>
<feature type="strand" evidence="10">
    <location>
        <begin position="64"/>
        <end position="67"/>
    </location>
</feature>
<feature type="turn" evidence="10">
    <location>
        <begin position="68"/>
        <end position="71"/>
    </location>
</feature>
<feature type="strand" evidence="10">
    <location>
        <begin position="72"/>
        <end position="75"/>
    </location>
</feature>
<feature type="helix" evidence="10">
    <location>
        <begin position="81"/>
        <end position="85"/>
    </location>
</feature>
<feature type="strand" evidence="10">
    <location>
        <begin position="92"/>
        <end position="99"/>
    </location>
</feature>
<feature type="turn" evidence="10">
    <location>
        <begin position="100"/>
        <end position="103"/>
    </location>
</feature>
<feature type="strand" evidence="10">
    <location>
        <begin position="104"/>
        <end position="113"/>
    </location>
</feature>
<feature type="strand" evidence="10">
    <location>
        <begin position="123"/>
        <end position="132"/>
    </location>
</feature>
<feature type="strand" evidence="10">
    <location>
        <begin position="140"/>
        <end position="142"/>
    </location>
</feature>
<feature type="helix" evidence="10">
    <location>
        <begin position="152"/>
        <end position="154"/>
    </location>
</feature>
<feature type="strand" evidence="10">
    <location>
        <begin position="155"/>
        <end position="161"/>
    </location>
</feature>
<feature type="strand" evidence="10">
    <location>
        <begin position="165"/>
        <end position="175"/>
    </location>
</feature>
<feature type="strand" evidence="10">
    <location>
        <begin position="178"/>
        <end position="185"/>
    </location>
</feature>
<feature type="turn" evidence="10">
    <location>
        <begin position="191"/>
        <end position="193"/>
    </location>
</feature>
<feature type="strand" evidence="10">
    <location>
        <begin position="195"/>
        <end position="206"/>
    </location>
</feature>
<feature type="strand" evidence="10">
    <location>
        <begin position="231"/>
        <end position="241"/>
    </location>
</feature>
<feature type="strand" evidence="10">
    <location>
        <begin position="249"/>
        <end position="251"/>
    </location>
</feature>
<feature type="strand" evidence="10">
    <location>
        <begin position="253"/>
        <end position="260"/>
    </location>
</feature>
<feature type="strand" evidence="10">
    <location>
        <begin position="268"/>
        <end position="271"/>
    </location>
</feature>
<feature type="helix" evidence="10">
    <location>
        <begin position="280"/>
        <end position="283"/>
    </location>
</feature>
<feature type="strand" evidence="10">
    <location>
        <begin position="285"/>
        <end position="289"/>
    </location>
</feature>
<feature type="helix" evidence="10">
    <location>
        <begin position="295"/>
        <end position="300"/>
    </location>
</feature>
<feature type="strand" evidence="10">
    <location>
        <begin position="301"/>
        <end position="303"/>
    </location>
</feature>
<feature type="turn" evidence="10">
    <location>
        <begin position="305"/>
        <end position="307"/>
    </location>
</feature>
<feature type="strand" evidence="10">
    <location>
        <begin position="309"/>
        <end position="312"/>
    </location>
</feature>
<feature type="turn" evidence="10">
    <location>
        <begin position="318"/>
        <end position="320"/>
    </location>
</feature>
<feature type="strand" evidence="10">
    <location>
        <begin position="322"/>
        <end position="334"/>
    </location>
</feature>
<feature type="strand" evidence="10">
    <location>
        <begin position="340"/>
        <end position="349"/>
    </location>
</feature>
<feature type="strand" evidence="10">
    <location>
        <begin position="357"/>
        <end position="363"/>
    </location>
</feature>
<feature type="strand" evidence="10">
    <location>
        <begin position="365"/>
        <end position="367"/>
    </location>
</feature>
<feature type="strand" evidence="10">
    <location>
        <begin position="376"/>
        <end position="383"/>
    </location>
</feature>
<feature type="helix" evidence="10">
    <location>
        <begin position="388"/>
        <end position="391"/>
    </location>
</feature>
<feature type="strand" evidence="10">
    <location>
        <begin position="393"/>
        <end position="397"/>
    </location>
</feature>
<feature type="strand" evidence="10">
    <location>
        <begin position="402"/>
        <end position="409"/>
    </location>
</feature>
<feature type="strand" evidence="10">
    <location>
        <begin position="412"/>
        <end position="417"/>
    </location>
</feature>
<feature type="turn" evidence="10">
    <location>
        <begin position="423"/>
        <end position="426"/>
    </location>
</feature>
<feature type="strand" evidence="10">
    <location>
        <begin position="428"/>
        <end position="437"/>
    </location>
</feature>
<feature type="strand" evidence="10">
    <location>
        <begin position="439"/>
        <end position="441"/>
    </location>
</feature>
<feature type="strand" evidence="10">
    <location>
        <begin position="444"/>
        <end position="453"/>
    </location>
</feature>
<feature type="strand" evidence="11">
    <location>
        <begin position="462"/>
        <end position="464"/>
    </location>
</feature>
<feature type="strand" evidence="11">
    <location>
        <begin position="466"/>
        <end position="473"/>
    </location>
</feature>
<feature type="strand" evidence="11">
    <location>
        <begin position="480"/>
        <end position="484"/>
    </location>
</feature>
<feature type="helix" evidence="11">
    <location>
        <begin position="493"/>
        <end position="496"/>
    </location>
</feature>
<feature type="strand" evidence="11">
    <location>
        <begin position="498"/>
        <end position="502"/>
    </location>
</feature>
<feature type="helix" evidence="11">
    <location>
        <begin position="512"/>
        <end position="514"/>
    </location>
</feature>
<feature type="strand" evidence="11">
    <location>
        <begin position="516"/>
        <end position="518"/>
    </location>
</feature>
<feature type="turn" evidence="11">
    <location>
        <begin position="520"/>
        <end position="522"/>
    </location>
</feature>
<feature type="strand" evidence="11">
    <location>
        <begin position="524"/>
        <end position="527"/>
    </location>
</feature>
<feature type="turn" evidence="11">
    <location>
        <begin position="533"/>
        <end position="535"/>
    </location>
</feature>
<feature type="strand" evidence="11">
    <location>
        <begin position="538"/>
        <end position="547"/>
    </location>
</feature>
<feature type="strand" evidence="11">
    <location>
        <begin position="550"/>
        <end position="552"/>
    </location>
</feature>
<feature type="strand" evidence="11">
    <location>
        <begin position="555"/>
        <end position="565"/>
    </location>
</feature>
<feature type="strand" evidence="11">
    <location>
        <begin position="573"/>
        <end position="577"/>
    </location>
</feature>
<feature type="strand" evidence="11">
    <location>
        <begin position="581"/>
        <end position="583"/>
    </location>
</feature>
<feature type="strand" evidence="11">
    <location>
        <begin position="586"/>
        <end position="590"/>
    </location>
</feature>
<feature type="strand" evidence="11">
    <location>
        <begin position="599"/>
        <end position="602"/>
    </location>
</feature>
<feature type="strand" evidence="11">
    <location>
        <begin position="604"/>
        <end position="606"/>
    </location>
</feature>
<feature type="helix" evidence="11">
    <location>
        <begin position="611"/>
        <end position="613"/>
    </location>
</feature>
<feature type="strand" evidence="11">
    <location>
        <begin position="617"/>
        <end position="620"/>
    </location>
</feature>
<feature type="strand" evidence="11">
    <location>
        <begin position="625"/>
        <end position="627"/>
    </location>
</feature>
<feature type="strand" evidence="11">
    <location>
        <begin position="629"/>
        <end position="631"/>
    </location>
</feature>
<feature type="turn" evidence="11">
    <location>
        <begin position="633"/>
        <end position="635"/>
    </location>
</feature>
<feature type="strand" evidence="11">
    <location>
        <begin position="637"/>
        <end position="642"/>
    </location>
</feature>
<feature type="strand" evidence="11">
    <location>
        <begin position="654"/>
        <end position="661"/>
    </location>
</feature>
<feature type="strand" evidence="11">
    <location>
        <begin position="664"/>
        <end position="666"/>
    </location>
</feature>
<feature type="strand" evidence="11">
    <location>
        <begin position="669"/>
        <end position="678"/>
    </location>
</feature>
<comment type="function">
    <text>Potential calcium-dependent cell-adhesion protein.</text>
</comment>
<comment type="function">
    <text evidence="6">(Microbial infection) Acts as a receptor for Western equine encephalitis virus.</text>
</comment>
<comment type="subcellular location">
    <subcellularLocation>
        <location evidence="1">Cell membrane</location>
        <topology evidence="1">Single-pass type I membrane protein</topology>
    </subcellularLocation>
</comment>
<comment type="alternative products">
    <event type="alternative splicing"/>
    <isoform>
        <id>Q9P2E7-1</id>
        <name>1</name>
        <sequence type="displayed"/>
    </isoform>
    <isoform>
        <id>Q9P2E7-2</id>
        <name>2</name>
        <sequence type="described" ref="VSP_054404 VSP_054405"/>
    </isoform>
</comment>
<comment type="tissue specificity">
    <text evidence="5">Moderately expressed in all regions of the brain examined, as well as in testis and ovary, and low expression in all other tissues tested.</text>
</comment>
<comment type="sequence caution" evidence="9">
    <conflict type="erroneous initiation">
        <sequence resource="EMBL-CDS" id="BAA92638"/>
    </conflict>
</comment>
<sequence length="1040" mass="112936">MIVLLLFALLWMVEGVFSQLHYTVQEEQEHGTFVGNIAEDLGLDITKLSARGFQTVPNSRTPYLDLNLETGVLYVNEKIDREQICKQSPSCVLHLEVFLENPLELFQVEIEVLDINDNPPSFPEPDLTVEISESATPGTRFPLESAFDPDVGTNSLRDYEITPNSYFSLDVQTQGDGNRFAELVLEKPLDREQQAVHRYVLTAVDGGGGGGVGEGGGGGGGAGLPPQQQRTGTALLTIRVLDSNDNVPAFDQPVYTVSLPENSPPGTLVIQLNATDPDEGQNGEVVYSFSSHISPRARELFGLSPRTGRLEVSGELDYEESPVYQVYVQAKDLGPNAVPAHCKVLVRVLDANDNAPEISFSTVKEAVSEGAAPGTVVALFSVTDRDSEENGQVQCELLGDVPFRLKSSFKNYYTIVTEAPLDREAGDSYTLTVVARDRGEPALSTSKSIQVQVSDVNDNAPRFSQPVYDVYVTENNVPGAYIYAVSATDRDEGANAQLAYSILECQIQGMSVFTYVSINSENGYLYALRSFDYEQLKDFSFQVEARDAGSPQALAGNATVNILIVDQNDNAPAIVAPLPGRNGTPAREVLPRSAEPGYLLTRVAAVDADDGENARLTYSIVRGNEMNLFRMDWRTGELRTARRVPAKRDPQRPYELVIEVRDHGQPPLSSTATLVVQLVDGAVEPQGGGGSGGGGSGEHQRPSRSGGGETSLDLTLILIIALGSVSFIFLLAMIVLAVRCQKEKKLNIYTCLASDCCLCCCCCGGGGSTCCGRQARARKKKLSKSDIMLVQSSNVPSNPAQVPIEESGGFGSHHHNQNYCYQVCLTPESAKTDLMFLKPCSPSRSTDTEHNPCGAIVTGYTDQQPDIISNGSILSNETKHQRAELSYLVDRPRRVNSSAFQEADIVSSKDSGHGDSEQGDSDHDATNRAQSAGMDLFSNCTEECKALGHSDRCWMPSFVPSDGRQAADYRSNLHVPGMDSVPDTEVFETPEAQPGAERSFSTFGKEKALHSTLERKELDGLLTNTRAPYKPPYLTRKRIC</sequence>
<gene>
    <name type="primary">PCDH10</name>
    <name type="synonym">KIAA1400</name>
</gene>
<organism>
    <name type="scientific">Homo sapiens</name>
    <name type="common">Human</name>
    <dbReference type="NCBI Taxonomy" id="9606"/>
    <lineage>
        <taxon>Eukaryota</taxon>
        <taxon>Metazoa</taxon>
        <taxon>Chordata</taxon>
        <taxon>Craniata</taxon>
        <taxon>Vertebrata</taxon>
        <taxon>Euteleostomi</taxon>
        <taxon>Mammalia</taxon>
        <taxon>Eutheria</taxon>
        <taxon>Euarchontoglires</taxon>
        <taxon>Primates</taxon>
        <taxon>Haplorrhini</taxon>
        <taxon>Catarrhini</taxon>
        <taxon>Hominidae</taxon>
        <taxon>Homo</taxon>
    </lineage>
</organism>
<accession>Q9P2E7</accession>
<accession>Q4W5F6</accession>
<accession>Q96SF0</accession>
<name>PCD10_HUMAN</name>
<protein>
    <recommendedName>
        <fullName>Protocadherin-10</fullName>
    </recommendedName>
</protein>